<evidence type="ECO:0000250" key="1">
    <source>
        <dbReference type="UniProtKB" id="A1XQU5"/>
    </source>
</evidence>
<evidence type="ECO:0000250" key="2">
    <source>
        <dbReference type="UniProtKB" id="P61353"/>
    </source>
</evidence>
<evidence type="ECO:0000255" key="3"/>
<evidence type="ECO:0000269" key="4">
    <source>
    </source>
</evidence>
<evidence type="ECO:0000269" key="5">
    <source>
    </source>
</evidence>
<evidence type="ECO:0000269" key="6">
    <source>
    </source>
</evidence>
<evidence type="ECO:0000269" key="7">
    <source>
    </source>
</evidence>
<evidence type="ECO:0000269" key="8">
    <source>
    </source>
</evidence>
<evidence type="ECO:0000269" key="9">
    <source>
    </source>
</evidence>
<evidence type="ECO:0000269" key="10">
    <source>
    </source>
</evidence>
<evidence type="ECO:0000269" key="11">
    <source>
    </source>
</evidence>
<evidence type="ECO:0000269" key="12">
    <source>
    </source>
</evidence>
<evidence type="ECO:0000269" key="13">
    <source>
    </source>
</evidence>
<evidence type="ECO:0000269" key="14">
    <source>
    </source>
</evidence>
<evidence type="ECO:0000269" key="15">
    <source>
    </source>
</evidence>
<evidence type="ECO:0000305" key="16"/>
<evidence type="ECO:0007744" key="17">
    <source>
        <dbReference type="PDB" id="3JAG"/>
    </source>
</evidence>
<evidence type="ECO:0007744" key="18">
    <source>
        <dbReference type="PDB" id="3JAH"/>
    </source>
</evidence>
<evidence type="ECO:0007744" key="19">
    <source>
        <dbReference type="PDB" id="5LZU"/>
    </source>
</evidence>
<evidence type="ECO:0007744" key="20">
    <source>
        <dbReference type="PDB" id="6D90"/>
    </source>
</evidence>
<evidence type="ECO:0007744" key="21">
    <source>
        <dbReference type="PDB" id="6D9J"/>
    </source>
</evidence>
<evidence type="ECO:0007744" key="22">
    <source>
        <dbReference type="PDB" id="6FTI"/>
    </source>
</evidence>
<evidence type="ECO:0007744" key="23">
    <source>
        <dbReference type="PDB" id="6GZ3"/>
    </source>
</evidence>
<evidence type="ECO:0007744" key="24">
    <source>
        <dbReference type="PDB" id="6HCF"/>
    </source>
</evidence>
<evidence type="ECO:0007744" key="25">
    <source>
        <dbReference type="PDB" id="6HCJ"/>
    </source>
</evidence>
<evidence type="ECO:0007744" key="26">
    <source>
        <dbReference type="PDB" id="6MTB"/>
    </source>
</evidence>
<evidence type="ECO:0007744" key="27">
    <source>
        <dbReference type="PDB" id="6MTC"/>
    </source>
</evidence>
<evidence type="ECO:0007744" key="28">
    <source>
        <dbReference type="PDB" id="6R5Q"/>
    </source>
</evidence>
<evidence type="ECO:0007744" key="29">
    <source>
        <dbReference type="PDB" id="6R6G"/>
    </source>
</evidence>
<evidence type="ECO:0007744" key="30">
    <source>
        <dbReference type="PDB" id="6SGC"/>
    </source>
</evidence>
<evidence type="ECO:0007744" key="31">
    <source>
        <dbReference type="PDB" id="6ZVK"/>
    </source>
</evidence>
<evidence type="ECO:0007744" key="32">
    <source>
        <dbReference type="PDB" id="7A01"/>
    </source>
</evidence>
<evidence type="ECO:0007744" key="33">
    <source>
        <dbReference type="PDB" id="7OYD"/>
    </source>
</evidence>
<evidence type="ECO:0007744" key="34">
    <source>
        <dbReference type="PDB" id="7UCJ"/>
    </source>
</evidence>
<evidence type="ECO:0007744" key="35">
    <source>
        <dbReference type="PDB" id="7UCK"/>
    </source>
</evidence>
<name>RL27_RABIT</name>
<gene>
    <name type="primary">RPL27</name>
</gene>
<sequence length="136" mass="15798">MGKFMKPGKVVLVLAGRYSGRKAVIVKNIDDGTSDRPYSHALVAGIDRYPRKVTAAMGKKKIAKRSKIKSFVKVYNYNHLMPTRYSVDIPLDKTVVNKDVFRDPALKRKARREAKVKFEERYKTGKNKWFFQKLRF</sequence>
<keyword id="KW-0002">3D-structure</keyword>
<keyword id="KW-0007">Acetylation</keyword>
<keyword id="KW-0963">Cytoplasm</keyword>
<keyword id="KW-0256">Endoplasmic reticulum</keyword>
<keyword id="KW-1185">Reference proteome</keyword>
<keyword id="KW-0687">Ribonucleoprotein</keyword>
<keyword id="KW-0689">Ribosomal protein</keyword>
<dbReference type="EMBL" id="AAGW02039774">
    <property type="status" value="NOT_ANNOTATED_CDS"/>
    <property type="molecule type" value="Genomic_DNA"/>
</dbReference>
<dbReference type="EMBL" id="AAGW02052218">
    <property type="status" value="NOT_ANNOTATED_CDS"/>
    <property type="molecule type" value="Genomic_DNA"/>
</dbReference>
<dbReference type="RefSeq" id="XP_002714215.1">
    <property type="nucleotide sequence ID" value="XM_002714169.3"/>
</dbReference>
<dbReference type="RefSeq" id="XP_002719464.1">
    <property type="nucleotide sequence ID" value="XM_002719418.5"/>
</dbReference>
<dbReference type="RefSeq" id="XP_051681660.1">
    <property type="nucleotide sequence ID" value="XM_051825700.2"/>
</dbReference>
<dbReference type="PDB" id="3JAG">
    <property type="method" value="EM"/>
    <property type="resolution" value="3.65 A"/>
    <property type="chains" value="Z=2-136"/>
</dbReference>
<dbReference type="PDB" id="3JAH">
    <property type="method" value="EM"/>
    <property type="resolution" value="3.45 A"/>
    <property type="chains" value="Z=2-136"/>
</dbReference>
<dbReference type="PDB" id="3JAI">
    <property type="method" value="EM"/>
    <property type="resolution" value="3.65 A"/>
    <property type="chains" value="Z=2-136"/>
</dbReference>
<dbReference type="PDB" id="5LZS">
    <property type="method" value="EM"/>
    <property type="resolution" value="3.31 A"/>
    <property type="chains" value="Z=1-136"/>
</dbReference>
<dbReference type="PDB" id="5LZT">
    <property type="method" value="EM"/>
    <property type="resolution" value="3.65 A"/>
    <property type="chains" value="Z=1-136"/>
</dbReference>
<dbReference type="PDB" id="5LZU">
    <property type="method" value="EM"/>
    <property type="resolution" value="3.75 A"/>
    <property type="chains" value="Z=1-136"/>
</dbReference>
<dbReference type="PDB" id="5LZV">
    <property type="method" value="EM"/>
    <property type="resolution" value="3.35 A"/>
    <property type="chains" value="Z=1-136"/>
</dbReference>
<dbReference type="PDB" id="5LZW">
    <property type="method" value="EM"/>
    <property type="resolution" value="3.53 A"/>
    <property type="chains" value="Z=1-136"/>
</dbReference>
<dbReference type="PDB" id="5LZX">
    <property type="method" value="EM"/>
    <property type="resolution" value="3.67 A"/>
    <property type="chains" value="Z=1-136"/>
</dbReference>
<dbReference type="PDB" id="5LZY">
    <property type="method" value="EM"/>
    <property type="resolution" value="3.99 A"/>
    <property type="chains" value="Z=1-136"/>
</dbReference>
<dbReference type="PDB" id="5LZZ">
    <property type="method" value="EM"/>
    <property type="resolution" value="3.47 A"/>
    <property type="chains" value="Z=1-136"/>
</dbReference>
<dbReference type="PDB" id="6D90">
    <property type="method" value="EM"/>
    <property type="resolution" value="3.20 A"/>
    <property type="chains" value="Z=1-136"/>
</dbReference>
<dbReference type="PDB" id="6D9J">
    <property type="method" value="EM"/>
    <property type="resolution" value="3.20 A"/>
    <property type="chains" value="Z=1-136"/>
</dbReference>
<dbReference type="PDB" id="6FTG">
    <property type="method" value="EM"/>
    <property type="resolution" value="9.10 A"/>
    <property type="chains" value="Z=2-136"/>
</dbReference>
<dbReference type="PDB" id="6FTI">
    <property type="method" value="EM"/>
    <property type="resolution" value="4.20 A"/>
    <property type="chains" value="Z=2-136"/>
</dbReference>
<dbReference type="PDB" id="6FTJ">
    <property type="method" value="EM"/>
    <property type="resolution" value="4.70 A"/>
    <property type="chains" value="Z=2-136"/>
</dbReference>
<dbReference type="PDB" id="6GZ3">
    <property type="method" value="EM"/>
    <property type="resolution" value="3.60 A"/>
    <property type="chains" value="AZ=3-136"/>
</dbReference>
<dbReference type="PDB" id="6HCF">
    <property type="method" value="EM"/>
    <property type="resolution" value="3.90 A"/>
    <property type="chains" value="Z3=1-136"/>
</dbReference>
<dbReference type="PDB" id="6HCJ">
    <property type="method" value="EM"/>
    <property type="resolution" value="3.80 A"/>
    <property type="chains" value="Z3=1-136"/>
</dbReference>
<dbReference type="PDB" id="6HCQ">
    <property type="method" value="EM"/>
    <property type="resolution" value="6.50 A"/>
    <property type="chains" value="Z3=1-136"/>
</dbReference>
<dbReference type="PDB" id="6MTB">
    <property type="method" value="EM"/>
    <property type="resolution" value="3.60 A"/>
    <property type="chains" value="Z=2-136"/>
</dbReference>
<dbReference type="PDB" id="6MTC">
    <property type="method" value="EM"/>
    <property type="resolution" value="3.40 A"/>
    <property type="chains" value="Z=2-136"/>
</dbReference>
<dbReference type="PDB" id="6MTD">
    <property type="method" value="EM"/>
    <property type="resolution" value="3.30 A"/>
    <property type="chains" value="Z=2-136"/>
</dbReference>
<dbReference type="PDB" id="6MTE">
    <property type="method" value="EM"/>
    <property type="resolution" value="3.40 A"/>
    <property type="chains" value="Z=2-136"/>
</dbReference>
<dbReference type="PDB" id="6P5I">
    <property type="method" value="EM"/>
    <property type="resolution" value="3.10 A"/>
    <property type="chains" value="AZ=1-136"/>
</dbReference>
<dbReference type="PDB" id="6P5J">
    <property type="method" value="EM"/>
    <property type="resolution" value="3.10 A"/>
    <property type="chains" value="AZ=1-136"/>
</dbReference>
<dbReference type="PDB" id="6P5K">
    <property type="method" value="EM"/>
    <property type="resolution" value="3.10 A"/>
    <property type="chains" value="AZ=1-136"/>
</dbReference>
<dbReference type="PDB" id="6P5N">
    <property type="method" value="EM"/>
    <property type="resolution" value="3.20 A"/>
    <property type="chains" value="AZ=1-136"/>
</dbReference>
<dbReference type="PDB" id="6R5Q">
    <property type="method" value="EM"/>
    <property type="resolution" value="3.00 A"/>
    <property type="chains" value="Z=2-136"/>
</dbReference>
<dbReference type="PDB" id="6R6G">
    <property type="method" value="EM"/>
    <property type="resolution" value="3.70 A"/>
    <property type="chains" value="Z=2-136"/>
</dbReference>
<dbReference type="PDB" id="6R6P">
    <property type="method" value="EM"/>
    <property type="resolution" value="3.10 A"/>
    <property type="chains" value="Z=2-136"/>
</dbReference>
<dbReference type="PDB" id="6R7Q">
    <property type="method" value="EM"/>
    <property type="resolution" value="3.90 A"/>
    <property type="chains" value="Z=2-136"/>
</dbReference>
<dbReference type="PDB" id="6SGC">
    <property type="method" value="EM"/>
    <property type="resolution" value="2.80 A"/>
    <property type="chains" value="Z2=1-136"/>
</dbReference>
<dbReference type="PDB" id="6T59">
    <property type="method" value="EM"/>
    <property type="resolution" value="3.11 A"/>
    <property type="chains" value="Z3=1-136"/>
</dbReference>
<dbReference type="PDB" id="6ZVK">
    <property type="method" value="EM"/>
    <property type="resolution" value="3.49 A"/>
    <property type="chains" value="22=2-136"/>
</dbReference>
<dbReference type="PDB" id="7A01">
    <property type="method" value="EM"/>
    <property type="resolution" value="3.60 A"/>
    <property type="chains" value="22=2-136"/>
</dbReference>
<dbReference type="PDB" id="7MDZ">
    <property type="method" value="EM"/>
    <property type="resolution" value="3.20 A"/>
    <property type="chains" value="Z=1-136"/>
</dbReference>
<dbReference type="PDB" id="7NFX">
    <property type="method" value="EM"/>
    <property type="resolution" value="3.20 A"/>
    <property type="chains" value="Z=1-136"/>
</dbReference>
<dbReference type="PDB" id="7NWG">
    <property type="method" value="EM"/>
    <property type="resolution" value="3.80 A"/>
    <property type="chains" value="Z3=2-136"/>
</dbReference>
<dbReference type="PDB" id="7NWH">
    <property type="method" value="EM"/>
    <property type="resolution" value="4.10 A"/>
    <property type="chains" value="Z=1-136"/>
</dbReference>
<dbReference type="PDB" id="7NWI">
    <property type="method" value="EM"/>
    <property type="resolution" value="3.13 A"/>
    <property type="chains" value="Z=2-136"/>
</dbReference>
<dbReference type="PDB" id="7O7Y">
    <property type="method" value="EM"/>
    <property type="resolution" value="2.20 A"/>
    <property type="chains" value="BZ=1-136"/>
</dbReference>
<dbReference type="PDB" id="7O7Z">
    <property type="method" value="EM"/>
    <property type="resolution" value="2.40 A"/>
    <property type="chains" value="BZ=1-136"/>
</dbReference>
<dbReference type="PDB" id="7O80">
    <property type="method" value="EM"/>
    <property type="resolution" value="2.90 A"/>
    <property type="chains" value="BZ=1-136"/>
</dbReference>
<dbReference type="PDB" id="7O81">
    <property type="method" value="EM"/>
    <property type="resolution" value="3.10 A"/>
    <property type="chains" value="BZ=1-136"/>
</dbReference>
<dbReference type="PDB" id="7OBR">
    <property type="method" value="EM"/>
    <property type="resolution" value="2.80 A"/>
    <property type="chains" value="Z=1-136"/>
</dbReference>
<dbReference type="PDB" id="7OYD">
    <property type="method" value="EM"/>
    <property type="resolution" value="2.30 A"/>
    <property type="chains" value="Z=1-136"/>
</dbReference>
<dbReference type="PDB" id="7QWQ">
    <property type="method" value="EM"/>
    <property type="resolution" value="2.83 A"/>
    <property type="chains" value="Z=1-136"/>
</dbReference>
<dbReference type="PDB" id="7QWR">
    <property type="method" value="EM"/>
    <property type="resolution" value="2.90 A"/>
    <property type="chains" value="Z=1-136"/>
</dbReference>
<dbReference type="PDB" id="7QWS">
    <property type="method" value="EM"/>
    <property type="resolution" value="3.40 A"/>
    <property type="chains" value="Z=1-136"/>
</dbReference>
<dbReference type="PDB" id="7TM3">
    <property type="method" value="EM"/>
    <property type="resolution" value="3.25 A"/>
    <property type="chains" value="Z=1-136"/>
</dbReference>
<dbReference type="PDB" id="7TOQ">
    <property type="method" value="EM"/>
    <property type="resolution" value="3.10 A"/>
    <property type="chains" value="AL27=2-136"/>
</dbReference>
<dbReference type="PDB" id="7TOR">
    <property type="method" value="EM"/>
    <property type="resolution" value="2.90 A"/>
    <property type="chains" value="AL27=2-136"/>
</dbReference>
<dbReference type="PDB" id="7TUT">
    <property type="method" value="EM"/>
    <property type="resolution" value="3.88 A"/>
    <property type="chains" value="Z=1-136"/>
</dbReference>
<dbReference type="PDB" id="7UCJ">
    <property type="method" value="EM"/>
    <property type="resolution" value="3.10 A"/>
    <property type="chains" value="Z=2-136"/>
</dbReference>
<dbReference type="PDB" id="7UCK">
    <property type="method" value="EM"/>
    <property type="resolution" value="2.80 A"/>
    <property type="chains" value="Z=2-136"/>
</dbReference>
<dbReference type="PDB" id="8B5L">
    <property type="method" value="EM"/>
    <property type="resolution" value="2.86 A"/>
    <property type="chains" value="Z=2-136"/>
</dbReference>
<dbReference type="PDB" id="8B6C">
    <property type="method" value="EM"/>
    <property type="resolution" value="2.79 A"/>
    <property type="chains" value="Z=2-136"/>
</dbReference>
<dbReference type="PDB" id="8BHF">
    <property type="method" value="EM"/>
    <property type="resolution" value="3.10 A"/>
    <property type="chains" value="M1=2-136"/>
</dbReference>
<dbReference type="PDB" id="8BPO">
    <property type="method" value="EM"/>
    <property type="resolution" value="2.80 A"/>
    <property type="chains" value="Y2=1-136"/>
</dbReference>
<dbReference type="PDB" id="8BTK">
    <property type="method" value="EM"/>
    <property type="resolution" value="3.50 A"/>
    <property type="chains" value="BZ=1-136"/>
</dbReference>
<dbReference type="PDB" id="8P2K">
    <property type="method" value="EM"/>
    <property type="resolution" value="2.90 A"/>
    <property type="chains" value="BZ=1-136"/>
</dbReference>
<dbReference type="PDB" id="8RJB">
    <property type="method" value="EM"/>
    <property type="resolution" value="2.69 A"/>
    <property type="chains" value="Z=1-136"/>
</dbReference>
<dbReference type="PDB" id="8RJC">
    <property type="method" value="EM"/>
    <property type="resolution" value="2.90 A"/>
    <property type="chains" value="Z=1-136"/>
</dbReference>
<dbReference type="PDB" id="8RJD">
    <property type="method" value="EM"/>
    <property type="resolution" value="2.79 A"/>
    <property type="chains" value="Z=1-136"/>
</dbReference>
<dbReference type="PDB" id="8SCB">
    <property type="method" value="EM"/>
    <property type="resolution" value="2.50 A"/>
    <property type="chains" value="Z=1-136"/>
</dbReference>
<dbReference type="PDB" id="8VFT">
    <property type="method" value="EM"/>
    <property type="resolution" value="3.30 A"/>
    <property type="chains" value="Z=1-136"/>
</dbReference>
<dbReference type="PDB" id="9BDL">
    <property type="method" value="EM"/>
    <property type="resolution" value="2.80 A"/>
    <property type="chains" value="AL27=2-136"/>
</dbReference>
<dbReference type="PDB" id="9BDN">
    <property type="method" value="EM"/>
    <property type="resolution" value="3.10 A"/>
    <property type="chains" value="AL27=2-136"/>
</dbReference>
<dbReference type="PDB" id="9BDP">
    <property type="method" value="EM"/>
    <property type="resolution" value="3.70 A"/>
    <property type="chains" value="AL27=2-136"/>
</dbReference>
<dbReference type="PDB" id="9F1B">
    <property type="method" value="EM"/>
    <property type="resolution" value="3.01 A"/>
    <property type="chains" value="BZ=1-136"/>
</dbReference>
<dbReference type="PDB" id="9F1C">
    <property type="method" value="EM"/>
    <property type="resolution" value="3.78 A"/>
    <property type="chains" value="BZ=1-136"/>
</dbReference>
<dbReference type="PDB" id="9F1D">
    <property type="method" value="EM"/>
    <property type="resolution" value="3.26 A"/>
    <property type="chains" value="BZ=1-136"/>
</dbReference>
<dbReference type="PDBsum" id="3JAG"/>
<dbReference type="PDBsum" id="3JAH"/>
<dbReference type="PDBsum" id="3JAI"/>
<dbReference type="PDBsum" id="5LZS"/>
<dbReference type="PDBsum" id="5LZT"/>
<dbReference type="PDBsum" id="5LZU"/>
<dbReference type="PDBsum" id="5LZV"/>
<dbReference type="PDBsum" id="5LZW"/>
<dbReference type="PDBsum" id="5LZX"/>
<dbReference type="PDBsum" id="5LZY"/>
<dbReference type="PDBsum" id="5LZZ"/>
<dbReference type="PDBsum" id="6D90"/>
<dbReference type="PDBsum" id="6D9J"/>
<dbReference type="PDBsum" id="6FTG"/>
<dbReference type="PDBsum" id="6FTI"/>
<dbReference type="PDBsum" id="6FTJ"/>
<dbReference type="PDBsum" id="6GZ3"/>
<dbReference type="PDBsum" id="6HCF"/>
<dbReference type="PDBsum" id="6HCJ"/>
<dbReference type="PDBsum" id="6HCQ"/>
<dbReference type="PDBsum" id="6MTB"/>
<dbReference type="PDBsum" id="6MTC"/>
<dbReference type="PDBsum" id="6MTD"/>
<dbReference type="PDBsum" id="6MTE"/>
<dbReference type="PDBsum" id="6P5I"/>
<dbReference type="PDBsum" id="6P5J"/>
<dbReference type="PDBsum" id="6P5K"/>
<dbReference type="PDBsum" id="6P5N"/>
<dbReference type="PDBsum" id="6R5Q"/>
<dbReference type="PDBsum" id="6R6G"/>
<dbReference type="PDBsum" id="6R6P"/>
<dbReference type="PDBsum" id="6R7Q"/>
<dbReference type="PDBsum" id="6SGC"/>
<dbReference type="PDBsum" id="6T59"/>
<dbReference type="PDBsum" id="6ZVK"/>
<dbReference type="PDBsum" id="7A01"/>
<dbReference type="PDBsum" id="7MDZ"/>
<dbReference type="PDBsum" id="7NFX"/>
<dbReference type="PDBsum" id="7NWG"/>
<dbReference type="PDBsum" id="7NWH"/>
<dbReference type="PDBsum" id="7NWI"/>
<dbReference type="PDBsum" id="7O7Y"/>
<dbReference type="PDBsum" id="7O7Z"/>
<dbReference type="PDBsum" id="7O80"/>
<dbReference type="PDBsum" id="7O81"/>
<dbReference type="PDBsum" id="7OBR"/>
<dbReference type="PDBsum" id="7OYD"/>
<dbReference type="PDBsum" id="7QWQ"/>
<dbReference type="PDBsum" id="7QWR"/>
<dbReference type="PDBsum" id="7QWS"/>
<dbReference type="PDBsum" id="7TM3"/>
<dbReference type="PDBsum" id="7TOQ"/>
<dbReference type="PDBsum" id="7TOR"/>
<dbReference type="PDBsum" id="7TUT"/>
<dbReference type="PDBsum" id="7UCJ"/>
<dbReference type="PDBsum" id="7UCK"/>
<dbReference type="PDBsum" id="8B5L"/>
<dbReference type="PDBsum" id="8B6C"/>
<dbReference type="PDBsum" id="8BHF"/>
<dbReference type="PDBsum" id="8BPO"/>
<dbReference type="PDBsum" id="8BTK"/>
<dbReference type="PDBsum" id="8P2K"/>
<dbReference type="PDBsum" id="8RJB"/>
<dbReference type="PDBsum" id="8RJC"/>
<dbReference type="PDBsum" id="8RJD"/>
<dbReference type="PDBsum" id="8SCB"/>
<dbReference type="PDBsum" id="8VFT"/>
<dbReference type="PDBsum" id="9BDL"/>
<dbReference type="PDBsum" id="9BDN"/>
<dbReference type="PDBsum" id="9BDP"/>
<dbReference type="PDBsum" id="9F1B"/>
<dbReference type="PDBsum" id="9F1C"/>
<dbReference type="PDBsum" id="9F1D"/>
<dbReference type="EMDB" id="EMD-0098"/>
<dbReference type="EMDB" id="EMD-0099"/>
<dbReference type="EMDB" id="EMD-0100"/>
<dbReference type="EMDB" id="EMD-0192"/>
<dbReference type="EMDB" id="EMD-0194"/>
<dbReference type="EMDB" id="EMD-0195"/>
<dbReference type="EMDB" id="EMD-0197"/>
<dbReference type="EMDB" id="EMD-10181"/>
<dbReference type="EMDB" id="EMD-10380"/>
<dbReference type="EMDB" id="EMD-11459"/>
<dbReference type="EMDB" id="EMD-11590"/>
<dbReference type="EMDB" id="EMD-12303"/>
<dbReference type="EMDB" id="EMD-12631"/>
<dbReference type="EMDB" id="EMD-12632"/>
<dbReference type="EMDB" id="EMD-12633"/>
<dbReference type="EMDB" id="EMD-12756"/>
<dbReference type="EMDB" id="EMD-12757"/>
<dbReference type="EMDB" id="EMD-12758"/>
<dbReference type="EMDB" id="EMD-12759"/>
<dbReference type="EMDB" id="EMD-12801"/>
<dbReference type="EMDB" id="EMD-13114"/>
<dbReference type="EMDB" id="EMD-14191"/>
<dbReference type="EMDB" id="EMD-14192"/>
<dbReference type="EMDB" id="EMD-14193"/>
<dbReference type="EMDB" id="EMD-15860"/>
<dbReference type="EMDB" id="EMD-15863"/>
<dbReference type="EMDB" id="EMD-16052"/>
<dbReference type="EMDB" id="EMD-16155"/>
<dbReference type="EMDB" id="EMD-16232"/>
<dbReference type="EMDB" id="EMD-17367"/>
<dbReference type="EMDB" id="EMD-19195"/>
<dbReference type="EMDB" id="EMD-19197"/>
<dbReference type="EMDB" id="EMD-19198"/>
<dbReference type="EMDB" id="EMD-20255"/>
<dbReference type="EMDB" id="EMD-20256"/>
<dbReference type="EMDB" id="EMD-20257"/>
<dbReference type="EMDB" id="EMD-20258"/>
<dbReference type="EMDB" id="EMD-23785"/>
<dbReference type="EMDB" id="EMD-25994"/>
<dbReference type="EMDB" id="EMD-26035"/>
<dbReference type="EMDB" id="EMD-26036"/>
<dbReference type="EMDB" id="EMD-26133"/>
<dbReference type="EMDB" id="EMD-26444"/>
<dbReference type="EMDB" id="EMD-26445"/>
<dbReference type="EMDB" id="EMD-40344"/>
<dbReference type="EMDB" id="EMD-4130"/>
<dbReference type="EMDB" id="EMD-4131"/>
<dbReference type="EMDB" id="EMD-4132"/>
<dbReference type="EMDB" id="EMD-4133"/>
<dbReference type="EMDB" id="EMD-4134"/>
<dbReference type="EMDB" id="EMD-4135"/>
<dbReference type="EMDB" id="EMD-4136"/>
<dbReference type="EMDB" id="EMD-4137"/>
<dbReference type="EMDB" id="EMD-4300"/>
<dbReference type="EMDB" id="EMD-4315"/>
<dbReference type="EMDB" id="EMD-4316"/>
<dbReference type="EMDB" id="EMD-4317"/>
<dbReference type="EMDB" id="EMD-43189"/>
<dbReference type="EMDB" id="EMD-44461"/>
<dbReference type="EMDB" id="EMD-44463"/>
<dbReference type="EMDB" id="EMD-44464"/>
<dbReference type="EMDB" id="EMD-4729"/>
<dbReference type="EMDB" id="EMD-4735"/>
<dbReference type="EMDB" id="EMD-4737"/>
<dbReference type="EMDB" id="EMD-4745"/>
<dbReference type="EMDB" id="EMD-50124"/>
<dbReference type="EMDB" id="EMD-50125"/>
<dbReference type="EMDB" id="EMD-50126"/>
<dbReference type="EMDB" id="EMD-7834"/>
<dbReference type="EMDB" id="EMD-7836"/>
<dbReference type="EMDB" id="EMD-9237"/>
<dbReference type="EMDB" id="EMD-9239"/>
<dbReference type="EMDB" id="EMD-9240"/>
<dbReference type="EMDB" id="EMD-9242"/>
<dbReference type="SMR" id="G1TXF6"/>
<dbReference type="FunCoup" id="G1TXF6">
    <property type="interactions" value="1403"/>
</dbReference>
<dbReference type="IntAct" id="G1TXF6">
    <property type="interactions" value="1"/>
</dbReference>
<dbReference type="STRING" id="9986.ENSOCUP00000003355"/>
<dbReference type="PaxDb" id="9986-ENSOCUP00000003355"/>
<dbReference type="Ensembl" id="ENSOCUT00000003870.3">
    <property type="protein sequence ID" value="ENSOCUP00000003355.2"/>
    <property type="gene ID" value="ENSOCUG00000003872.3"/>
</dbReference>
<dbReference type="Ensembl" id="ENSOCUT00000027169.1">
    <property type="protein sequence ID" value="ENSOCUP00000021758.1"/>
    <property type="gene ID" value="ENSOCUG00000024462.1"/>
</dbReference>
<dbReference type="GeneID" id="138843020"/>
<dbReference type="KEGG" id="ocu:100356974"/>
<dbReference type="CTD" id="146923"/>
<dbReference type="eggNOG" id="KOG3418">
    <property type="taxonomic scope" value="Eukaryota"/>
</dbReference>
<dbReference type="GeneTree" id="ENSGT00390000010721"/>
<dbReference type="HOGENOM" id="CLU_067359_0_1_1"/>
<dbReference type="OMA" id="NQWFFTK"/>
<dbReference type="OrthoDB" id="2365484at2759"/>
<dbReference type="TreeFam" id="TF314648"/>
<dbReference type="Proteomes" id="UP000001811">
    <property type="component" value="Chromosome 12"/>
</dbReference>
<dbReference type="Proteomes" id="UP000001811">
    <property type="component" value="Chromosome 19"/>
</dbReference>
<dbReference type="Bgee" id="ENSOCUG00000003872">
    <property type="expression patterns" value="Expressed in uterus and 15 other cell types or tissues"/>
</dbReference>
<dbReference type="GO" id="GO:0022625">
    <property type="term" value="C:cytosolic large ribosomal subunit"/>
    <property type="evidence" value="ECO:0007669"/>
    <property type="project" value="Ensembl"/>
</dbReference>
<dbReference type="GO" id="GO:0005791">
    <property type="term" value="C:rough endoplasmic reticulum"/>
    <property type="evidence" value="ECO:0007669"/>
    <property type="project" value="UniProtKB-SubCell"/>
</dbReference>
<dbReference type="GO" id="GO:0045202">
    <property type="term" value="C:synapse"/>
    <property type="evidence" value="ECO:0007669"/>
    <property type="project" value="Ensembl"/>
</dbReference>
<dbReference type="GO" id="GO:0003735">
    <property type="term" value="F:structural constituent of ribosome"/>
    <property type="evidence" value="ECO:0007669"/>
    <property type="project" value="Ensembl"/>
</dbReference>
<dbReference type="GO" id="GO:0006412">
    <property type="term" value="P:translation"/>
    <property type="evidence" value="ECO:0007669"/>
    <property type="project" value="InterPro"/>
</dbReference>
<dbReference type="CDD" id="cd06090">
    <property type="entry name" value="KOW_RPL27"/>
    <property type="match status" value="1"/>
</dbReference>
<dbReference type="FunFam" id="2.30.30.770:FF:000001">
    <property type="entry name" value="60S ribosomal protein L27"/>
    <property type="match status" value="1"/>
</dbReference>
<dbReference type="Gene3D" id="2.30.30.770">
    <property type="match status" value="1"/>
</dbReference>
<dbReference type="InterPro" id="IPR005824">
    <property type="entry name" value="KOW"/>
</dbReference>
<dbReference type="InterPro" id="IPR001141">
    <property type="entry name" value="Ribosomal_eL27"/>
</dbReference>
<dbReference type="InterPro" id="IPR018262">
    <property type="entry name" value="Ribosomal_eL27_CS"/>
</dbReference>
<dbReference type="InterPro" id="IPR041991">
    <property type="entry name" value="Ribosomal_eL27_KOW"/>
</dbReference>
<dbReference type="InterPro" id="IPR038655">
    <property type="entry name" value="Ribosomal_eL27_sf"/>
</dbReference>
<dbReference type="InterPro" id="IPR008991">
    <property type="entry name" value="Translation_prot_SH3-like_sf"/>
</dbReference>
<dbReference type="PANTHER" id="PTHR10497">
    <property type="entry name" value="60S RIBOSOMAL PROTEIN L27"/>
    <property type="match status" value="1"/>
</dbReference>
<dbReference type="Pfam" id="PF00467">
    <property type="entry name" value="KOW"/>
    <property type="match status" value="1"/>
</dbReference>
<dbReference type="Pfam" id="PF01777">
    <property type="entry name" value="Ribosomal_L27e"/>
    <property type="match status" value="1"/>
</dbReference>
<dbReference type="SMART" id="SM00739">
    <property type="entry name" value="KOW"/>
    <property type="match status" value="1"/>
</dbReference>
<dbReference type="SUPFAM" id="SSF50104">
    <property type="entry name" value="Translation proteins SH3-like domain"/>
    <property type="match status" value="1"/>
</dbReference>
<dbReference type="PROSITE" id="PS01107">
    <property type="entry name" value="RIBOSOMAL_L27E"/>
    <property type="match status" value="1"/>
</dbReference>
<organism>
    <name type="scientific">Oryctolagus cuniculus</name>
    <name type="common">Rabbit</name>
    <dbReference type="NCBI Taxonomy" id="9986"/>
    <lineage>
        <taxon>Eukaryota</taxon>
        <taxon>Metazoa</taxon>
        <taxon>Chordata</taxon>
        <taxon>Craniata</taxon>
        <taxon>Vertebrata</taxon>
        <taxon>Euteleostomi</taxon>
        <taxon>Mammalia</taxon>
        <taxon>Eutheria</taxon>
        <taxon>Euarchontoglires</taxon>
        <taxon>Glires</taxon>
        <taxon>Lagomorpha</taxon>
        <taxon>Leporidae</taxon>
        <taxon>Oryctolagus</taxon>
    </lineage>
</organism>
<proteinExistence type="evidence at protein level"/>
<feature type="chain" id="PRO_0000460117" description="Large ribosomal subunit protein eL27">
    <location>
        <begin position="1"/>
        <end position="136"/>
    </location>
</feature>
<feature type="domain" description="KOW" evidence="3">
    <location>
        <begin position="7"/>
        <end position="36"/>
    </location>
</feature>
<feature type="modified residue" description="N6-acetyllysine" evidence="2">
    <location>
        <position position="27"/>
    </location>
</feature>
<feature type="modified residue" description="N6-acetyllysine" evidence="2">
    <location>
        <position position="93"/>
    </location>
</feature>
<comment type="function">
    <text evidence="2 4 5 9">Component of the large ribosomal subunit (PubMed:26245381, PubMed:27863242, PubMed:30517857). Required for proper rRNA processing and maturation of 28S and 5.8S rRNAs (By similarity).</text>
</comment>
<comment type="subunit">
    <text evidence="2 4 5 6 7 8 9 10 11 12 13 14 15">Component of the large ribosomal subunit (PubMed:26245381, PubMed:27863242, PubMed:29856316, PubMed:30293783, PubMed:30355441, PubMed:30517857, PubMed:31246176, PubMed:31609474, PubMed:31768042, PubMed:33296660, PubMed:35679869, PubMed:36653451). Interacts with RRP1B. Interacts with DHX33 (By similarity).</text>
</comment>
<comment type="subcellular location">
    <subcellularLocation>
        <location evidence="2">Cytoplasm</location>
        <location evidence="2">Cytosol</location>
    </subcellularLocation>
    <subcellularLocation>
        <location evidence="4 5 6 7 8 9 10 11 12 13 14 15">Cytoplasm</location>
    </subcellularLocation>
    <subcellularLocation>
        <location evidence="1">Rough endoplasmic reticulum</location>
    </subcellularLocation>
    <text evidence="1 2">Detected on cytosolic polysomes (By similarity). Detected in ribosomes that are associated with the rough endoplasmic reticulum (By similarity).</text>
</comment>
<comment type="similarity">
    <text evidence="16">Belongs to the eukaryotic ribosomal protein eL27 family.</text>
</comment>
<reference key="1">
    <citation type="journal article" date="2011" name="Nature">
        <title>A high-resolution map of human evolutionary constraint using 29 mammals.</title>
        <authorList>
            <person name="Lindblad-Toh K."/>
            <person name="Garber M."/>
            <person name="Zuk O."/>
            <person name="Lin M.F."/>
            <person name="Parker B.J."/>
            <person name="Washietl S."/>
            <person name="Kheradpour P."/>
            <person name="Ernst J."/>
            <person name="Jordan G."/>
            <person name="Mauceli E."/>
            <person name="Ward L.D."/>
            <person name="Lowe C.B."/>
            <person name="Holloway A.K."/>
            <person name="Clamp M."/>
            <person name="Gnerre S."/>
            <person name="Alfoldi J."/>
            <person name="Beal K."/>
            <person name="Chang J."/>
            <person name="Clawson H."/>
            <person name="Cuff J."/>
            <person name="Di Palma F."/>
            <person name="Fitzgerald S."/>
            <person name="Flicek P."/>
            <person name="Guttman M."/>
            <person name="Hubisz M.J."/>
            <person name="Jaffe D.B."/>
            <person name="Jungreis I."/>
            <person name="Kent W.J."/>
            <person name="Kostka D."/>
            <person name="Lara M."/>
            <person name="Martins A.L."/>
            <person name="Massingham T."/>
            <person name="Moltke I."/>
            <person name="Raney B.J."/>
            <person name="Rasmussen M.D."/>
            <person name="Robinson J."/>
            <person name="Stark A."/>
            <person name="Vilella A.J."/>
            <person name="Wen J."/>
            <person name="Xie X."/>
            <person name="Zody M.C."/>
            <person name="Baldwin J."/>
            <person name="Bloom T."/>
            <person name="Chin C.W."/>
            <person name="Heiman D."/>
            <person name="Nicol R."/>
            <person name="Nusbaum C."/>
            <person name="Young S."/>
            <person name="Wilkinson J."/>
            <person name="Worley K.C."/>
            <person name="Kovar C.L."/>
            <person name="Muzny D.M."/>
            <person name="Gibbs R.A."/>
            <person name="Cree A."/>
            <person name="Dihn H.H."/>
            <person name="Fowler G."/>
            <person name="Jhangiani S."/>
            <person name="Joshi V."/>
            <person name="Lee S."/>
            <person name="Lewis L.R."/>
            <person name="Nazareth L.V."/>
            <person name="Okwuonu G."/>
            <person name="Santibanez J."/>
            <person name="Warren W.C."/>
            <person name="Mardis E.R."/>
            <person name="Weinstock G.M."/>
            <person name="Wilson R.K."/>
            <person name="Delehaunty K."/>
            <person name="Dooling D."/>
            <person name="Fronik C."/>
            <person name="Fulton L."/>
            <person name="Fulton B."/>
            <person name="Graves T."/>
            <person name="Minx P."/>
            <person name="Sodergren E."/>
            <person name="Birney E."/>
            <person name="Margulies E.H."/>
            <person name="Herrero J."/>
            <person name="Green E.D."/>
            <person name="Haussler D."/>
            <person name="Siepel A."/>
            <person name="Goldman N."/>
            <person name="Pollard K.S."/>
            <person name="Pedersen J.S."/>
            <person name="Lander E.S."/>
            <person name="Kellis M."/>
        </authorList>
    </citation>
    <scope>NUCLEOTIDE SEQUENCE [LARGE SCALE GENOMIC DNA]</scope>
    <source>
        <strain>Thorbecke</strain>
    </source>
</reference>
<reference evidence="17 18" key="2">
    <citation type="journal article" date="2015" name="Nature">
        <title>Structural basis for stop codon recognition in eukaryotes.</title>
        <authorList>
            <person name="Brown A."/>
            <person name="Shao S."/>
            <person name="Murray J."/>
            <person name="Hegde R.S."/>
            <person name="Ramakrishnan V."/>
        </authorList>
    </citation>
    <scope>STRUCTURE BY ELECTRON MICROSCOPY (3.45 ANGSTROMS) OF RIBOSOME</scope>
    <scope>FUNCTION</scope>
    <scope>SUBUNIT</scope>
    <scope>SUBCELLULAR LOCATION</scope>
</reference>
<reference evidence="19" key="3">
    <citation type="journal article" date="2016" name="Cell">
        <title>Decoding mammalian ribosome-mRNA states by translational GTPase complexes.</title>
        <authorList>
            <person name="Shao S."/>
            <person name="Murray J."/>
            <person name="Brown A."/>
            <person name="Taunton J."/>
            <person name="Ramakrishnan V."/>
            <person name="Hegde R.S."/>
        </authorList>
    </citation>
    <scope>STRUCTURE BY ELECTRON MICROSCOPY (3.31 ANGSTROMS) OF RIBOSOME</scope>
    <scope>FUNCTION</scope>
    <scope>SUBCELLULAR LOCATION</scope>
    <scope>SUBUNIT</scope>
</reference>
<reference evidence="23" key="4">
    <citation type="journal article" date="2018" name="Cell Rep.">
        <title>tRNA translocation by the eukaryotic 80S ribosome and the impact of GTP hydrolysis.</title>
        <authorList>
            <person name="Flis J."/>
            <person name="Holm M."/>
            <person name="Rundlet E.J."/>
            <person name="Loerke J."/>
            <person name="Hilal T."/>
            <person name="Dabrowski M."/>
            <person name="Burger J."/>
            <person name="Mielke T."/>
            <person name="Blanchard S.C."/>
            <person name="Spahn C.M.T."/>
            <person name="Budkevich T.V."/>
        </authorList>
    </citation>
    <scope>STRUCTURE BY ELECTRON MICROSCOPY (3.60 ANGSTROMS) OF RIBOSOME</scope>
    <scope>FUNCTION</scope>
    <scope>SUBCELLULAR LOCATION</scope>
    <scope>SUBUNIT</scope>
</reference>
<reference evidence="20" key="5">
    <citation type="journal article" date="2018" name="Elife">
        <title>Dual tRNA mimicry in the Cricket paralysis virus IRES uncovers an unexpected similarity with the Hepatitis C Virus IRES.</title>
        <authorList>
            <person name="Pisareva V.P."/>
            <person name="Pisarev A.V."/>
            <person name="Fernandez I.S."/>
        </authorList>
    </citation>
    <scope>STRUCTURE BY ELECTRON MICROSCOPY (3.20 ANGSTROMS) OF RIBOSOME</scope>
    <scope>SUBUNIT</scope>
    <scope>SUBCELLULAR LOCATION</scope>
</reference>
<reference evidence="26 27" key="6">
    <citation type="journal article" date="2018" name="Elife">
        <title>Structures of translationally inactive mammalian ribosomes.</title>
        <authorList>
            <person name="Brown A."/>
            <person name="Baird M.R."/>
            <person name="Yip M.C."/>
            <person name="Murray J."/>
            <person name="Shao S."/>
        </authorList>
    </citation>
    <scope>STRUCTURE BY ELECTRON MICROSCOPY (3.30 ANGSTROMS) OF RIBOSOME</scope>
    <scope>SUBCELLULAR LOCATION</scope>
    <scope>SUBUNIT</scope>
</reference>
<reference evidence="24 25" key="7">
    <citation type="journal article" date="2018" name="Mol. Cell">
        <title>ZNF598 is a quality control sensor of collided ribosomes.</title>
        <authorList>
            <person name="Juszkiewicz S."/>
            <person name="Chandrasekaran V."/>
            <person name="Lin Z."/>
            <person name="Kraatz S."/>
            <person name="Ramakrishnan V."/>
            <person name="Hegde R.S."/>
        </authorList>
    </citation>
    <scope>STRUCTURE BY ELECTRON MICROSCOPY (3.80 ANGSTROMS) OF RIBOSOME</scope>
    <scope>SUBCELLULAR LOCATION</scope>
    <scope>SUBUNIT</scope>
</reference>
<reference evidence="28 29" key="8">
    <citation type="journal article" date="2019" name="Elife">
        <title>Structural and mutational analysis of the ribosome-arresting human XBP1u.</title>
        <authorList>
            <person name="Shanmuganathan V."/>
            <person name="Schiller N."/>
            <person name="Magoulopoulou A."/>
            <person name="Cheng J."/>
            <person name="Braunger K."/>
            <person name="Cymer F."/>
            <person name="Berninghausen O."/>
            <person name="Beatrix B."/>
            <person name="Kohno K."/>
            <person name="von Heijne G."/>
            <person name="Beckmann R."/>
        </authorList>
    </citation>
    <scope>STRUCTURE BY ELECTRON MICROSCOPY (3.00 ANGSTROMS) OF RIBOSOME</scope>
    <scope>SUBCELLULAR LOCATION</scope>
    <scope>SUBUNIT</scope>
</reference>
<reference evidence="21 22" key="9">
    <citation type="journal article" date="2019" name="EMBO J.">
        <title>The Israeli acute paralysis virus IRES captures host ribosomes by mimicking a ribosomal state with hybrid tRNAs.</title>
        <authorList>
            <person name="Acosta-Reyes F."/>
            <person name="Neupane R."/>
            <person name="Frank J."/>
            <person name="Fernandez I.S."/>
        </authorList>
    </citation>
    <scope>STRUCTURE BY ELECTRON MICROSCOPY (3.10 ANGSTROMS) OF RIBOSOME</scope>
    <scope>SUBUNIT</scope>
    <scope>SUBCELLULAR LOCATION</scope>
</reference>
<reference evidence="30" key="10">
    <citation type="journal article" date="2019" name="Nat. Struct. Mol. Biol.">
        <title>Mechanism of ribosome stalling during translation of a poly(A) tail.</title>
        <authorList>
            <person name="Chandrasekaran V."/>
            <person name="Juszkiewicz S."/>
            <person name="Choi J."/>
            <person name="Puglisi J.D."/>
            <person name="Brown A."/>
            <person name="Shao S."/>
            <person name="Ramakrishnan V."/>
            <person name="Hegde R.S."/>
        </authorList>
    </citation>
    <scope>STRUCTURE BY ELECTRON MICROSCOPY (2.80 ANGSTROMS) OF RIBOSOME</scope>
    <scope>SUBCELLULAR LOCATION</scope>
    <scope>SUBUNIT</scope>
</reference>
<reference evidence="31 32" key="11">
    <citation type="journal article" date="2020" name="Cell Rep.">
        <title>The Halastavi arva virus intergenic region IRES promotes translation by the simplest possible initiation mechanism.</title>
        <authorList>
            <person name="Abaeva I.S."/>
            <person name="Vicens Q."/>
            <person name="Bochler A."/>
            <person name="Soufari H."/>
            <person name="Simonetti A."/>
            <person name="Pestova T.V."/>
            <person name="Hashem Y."/>
            <person name="Hellen C.U.T."/>
        </authorList>
    </citation>
    <scope>STRUCTURE BY ELECTRON MICROSCOPY (3.49 ANGSTROMS) OF RIBOSOME</scope>
    <scope>SUBCELLULAR LOCATION</scope>
    <scope>SUBUNIT</scope>
</reference>
<reference evidence="34 35" key="12">
    <citation type="journal article" date="2022" name="Mol. Cell">
        <title>Direct epitranscriptomic regulation of mammalian translation initiation through N4-acetylcytidine.</title>
        <authorList>
            <person name="Arango D."/>
            <person name="Sturgill D."/>
            <person name="Yang R."/>
            <person name="Kanai T."/>
            <person name="Bauer P."/>
            <person name="Roy J."/>
            <person name="Wang Z."/>
            <person name="Hosogane M."/>
            <person name="Schiffers S."/>
            <person name="Oberdoerffer S."/>
        </authorList>
    </citation>
    <scope>STRUCTURE BY ELECTRON MICROSCOPY (2.80 ANGSTROMS) OF RIBOSOME</scope>
    <scope>SUBCELLULAR LOCATION</scope>
    <scope>SUBUNIT</scope>
</reference>
<reference evidence="33" key="13">
    <citation type="journal article" date="2023" name="Nature">
        <title>A molecular network of conserved factors keeps ribosomes dormant in the egg.</title>
        <authorList>
            <person name="Leesch F."/>
            <person name="Lorenzo-Orts L."/>
            <person name="Pribitzer C."/>
            <person name="Grishkovskaya I."/>
            <person name="Roehsner J."/>
            <person name="Chugunova A."/>
            <person name="Matzinger M."/>
            <person name="Roitinger E."/>
            <person name="Belacic K."/>
            <person name="Kandolf S."/>
            <person name="Lin T.Y."/>
            <person name="Mechtler K."/>
            <person name="Meinhart A."/>
            <person name="Haselbach D."/>
            <person name="Pauli A."/>
        </authorList>
    </citation>
    <scope>STRUCTURE BY ELECTRON MICROSCOPY (2.30 ANGSTROMS) OF RIBOSOME</scope>
    <scope>SUBCELLULAR LOCATION</scope>
    <scope>SUBUNIT</scope>
</reference>
<accession>G1TXF6</accession>
<protein>
    <recommendedName>
        <fullName>Large ribosomal subunit protein eL27</fullName>
    </recommendedName>
    <alternativeName>
        <fullName>60S ribosomal protein L27</fullName>
    </alternativeName>
</protein>